<accession>P44762</accession>
<evidence type="ECO:0000250" key="1"/>
<evidence type="ECO:0000305" key="2"/>
<protein>
    <recommendedName>
        <fullName>Sulfurtransferase TusD homolog</fullName>
        <ecNumber>2.8.1.-</ecNumber>
    </recommendedName>
</protein>
<sequence length="126" mass="13997">MRYVIAVKSPIYGKQGAFLAYQFAESLIKKEHEISQIFFFQDGVSNGNALVYPANDEVNLQKHWQMFSITYNVPLHLCVAASQRRGVVDNLTTPTTAHYNLAEGFTIAGLGEFIAASLNADRVITL</sequence>
<comment type="function">
    <text evidence="1">Could be part of a sulfur-relay system.</text>
</comment>
<comment type="subcellular location">
    <subcellularLocation>
        <location evidence="1">Cytoplasm</location>
    </subcellularLocation>
</comment>
<comment type="similarity">
    <text evidence="2">Belongs to the DsrE/TusD family.</text>
</comment>
<organism>
    <name type="scientific">Haemophilus influenzae (strain ATCC 51907 / DSM 11121 / KW20 / Rd)</name>
    <dbReference type="NCBI Taxonomy" id="71421"/>
    <lineage>
        <taxon>Bacteria</taxon>
        <taxon>Pseudomonadati</taxon>
        <taxon>Pseudomonadota</taxon>
        <taxon>Gammaproteobacteria</taxon>
        <taxon>Pasteurellales</taxon>
        <taxon>Pasteurellaceae</taxon>
        <taxon>Haemophilus</taxon>
    </lineage>
</organism>
<gene>
    <name type="primary">tusD</name>
    <name type="ordered locus">HI_0576</name>
</gene>
<name>TUSD_HAEIN</name>
<feature type="chain" id="PRO_0000214728" description="Sulfurtransferase TusD homolog">
    <location>
        <begin position="1"/>
        <end position="126"/>
    </location>
</feature>
<feature type="active site" description="Cysteine persulfide intermediate" evidence="1">
    <location>
        <position position="78"/>
    </location>
</feature>
<proteinExistence type="inferred from homology"/>
<keyword id="KW-0963">Cytoplasm</keyword>
<keyword id="KW-1185">Reference proteome</keyword>
<keyword id="KW-0808">Transferase</keyword>
<dbReference type="EC" id="2.8.1.-"/>
<dbReference type="EMBL" id="L42023">
    <property type="protein sequence ID" value="AAC22234.1"/>
    <property type="molecule type" value="Genomic_DNA"/>
</dbReference>
<dbReference type="PIR" id="C64155">
    <property type="entry name" value="C64155"/>
</dbReference>
<dbReference type="RefSeq" id="NP_438733.1">
    <property type="nucleotide sequence ID" value="NC_000907.1"/>
</dbReference>
<dbReference type="SMR" id="P44762"/>
<dbReference type="STRING" id="71421.HI_0576"/>
<dbReference type="DNASU" id="950688"/>
<dbReference type="EnsemblBacteria" id="AAC22234">
    <property type="protein sequence ID" value="AAC22234"/>
    <property type="gene ID" value="HI_0576"/>
</dbReference>
<dbReference type="KEGG" id="hin:HI_0576"/>
<dbReference type="PATRIC" id="fig|71421.8.peg.596"/>
<dbReference type="eggNOG" id="COG1553">
    <property type="taxonomic scope" value="Bacteria"/>
</dbReference>
<dbReference type="HOGENOM" id="CLU_132095_0_0_6"/>
<dbReference type="OrthoDB" id="9787483at2"/>
<dbReference type="PhylomeDB" id="P44762"/>
<dbReference type="BioCyc" id="HINF71421:G1GJ1-588-MONOMER"/>
<dbReference type="Proteomes" id="UP000000579">
    <property type="component" value="Chromosome"/>
</dbReference>
<dbReference type="GO" id="GO:0005829">
    <property type="term" value="C:cytosol"/>
    <property type="evidence" value="ECO:0000318"/>
    <property type="project" value="GO_Central"/>
</dbReference>
<dbReference type="GO" id="GO:1990228">
    <property type="term" value="C:sulfurtransferase complex"/>
    <property type="evidence" value="ECO:0000318"/>
    <property type="project" value="GO_Central"/>
</dbReference>
<dbReference type="GO" id="GO:0097163">
    <property type="term" value="F:sulfur carrier activity"/>
    <property type="evidence" value="ECO:0000318"/>
    <property type="project" value="GO_Central"/>
</dbReference>
<dbReference type="GO" id="GO:0016783">
    <property type="term" value="F:sulfurtransferase activity"/>
    <property type="evidence" value="ECO:0007669"/>
    <property type="project" value="InterPro"/>
</dbReference>
<dbReference type="GO" id="GO:0002143">
    <property type="term" value="P:tRNA wobble position uridine thiolation"/>
    <property type="evidence" value="ECO:0000318"/>
    <property type="project" value="GO_Central"/>
</dbReference>
<dbReference type="FunFam" id="3.40.1260.10:FF:000001">
    <property type="entry name" value="Sulfurtransferase TusD"/>
    <property type="match status" value="1"/>
</dbReference>
<dbReference type="Gene3D" id="3.40.1260.10">
    <property type="entry name" value="DsrEFH-like"/>
    <property type="match status" value="1"/>
</dbReference>
<dbReference type="InterPro" id="IPR027396">
    <property type="entry name" value="DsrEFH-like"/>
</dbReference>
<dbReference type="InterPro" id="IPR003787">
    <property type="entry name" value="Sulphur_relay_DsrE/F-like"/>
</dbReference>
<dbReference type="InterPro" id="IPR017463">
    <property type="entry name" value="Sulphur_relay_TusD/DsrE"/>
</dbReference>
<dbReference type="NCBIfam" id="NF001237">
    <property type="entry name" value="PRK00207.1"/>
    <property type="match status" value="1"/>
</dbReference>
<dbReference type="NCBIfam" id="TIGR03012">
    <property type="entry name" value="sulf_tusD_dsrE"/>
    <property type="match status" value="1"/>
</dbReference>
<dbReference type="PANTHER" id="PTHR34874">
    <property type="entry name" value="PROTEIN YCHN"/>
    <property type="match status" value="1"/>
</dbReference>
<dbReference type="PANTHER" id="PTHR34874:SF3">
    <property type="entry name" value="SULFURTRANSFERASE TUSD"/>
    <property type="match status" value="1"/>
</dbReference>
<dbReference type="Pfam" id="PF02635">
    <property type="entry name" value="DsrE"/>
    <property type="match status" value="1"/>
</dbReference>
<dbReference type="SUPFAM" id="SSF75169">
    <property type="entry name" value="DsrEFH-like"/>
    <property type="match status" value="1"/>
</dbReference>
<reference key="1">
    <citation type="journal article" date="1995" name="Science">
        <title>Whole-genome random sequencing and assembly of Haemophilus influenzae Rd.</title>
        <authorList>
            <person name="Fleischmann R.D."/>
            <person name="Adams M.D."/>
            <person name="White O."/>
            <person name="Clayton R.A."/>
            <person name="Kirkness E.F."/>
            <person name="Kerlavage A.R."/>
            <person name="Bult C.J."/>
            <person name="Tomb J.-F."/>
            <person name="Dougherty B.A."/>
            <person name="Merrick J.M."/>
            <person name="McKenney K."/>
            <person name="Sutton G.G."/>
            <person name="FitzHugh W."/>
            <person name="Fields C.A."/>
            <person name="Gocayne J.D."/>
            <person name="Scott J.D."/>
            <person name="Shirley R."/>
            <person name="Liu L.-I."/>
            <person name="Glodek A."/>
            <person name="Kelley J.M."/>
            <person name="Weidman J.F."/>
            <person name="Phillips C.A."/>
            <person name="Spriggs T."/>
            <person name="Hedblom E."/>
            <person name="Cotton M.D."/>
            <person name="Utterback T.R."/>
            <person name="Hanna M.C."/>
            <person name="Nguyen D.T."/>
            <person name="Saudek D.M."/>
            <person name="Brandon R.C."/>
            <person name="Fine L.D."/>
            <person name="Fritchman J.L."/>
            <person name="Fuhrmann J.L."/>
            <person name="Geoghagen N.S.M."/>
            <person name="Gnehm C.L."/>
            <person name="McDonald L.A."/>
            <person name="Small K.V."/>
            <person name="Fraser C.M."/>
            <person name="Smith H.O."/>
            <person name="Venter J.C."/>
        </authorList>
    </citation>
    <scope>NUCLEOTIDE SEQUENCE [LARGE SCALE GENOMIC DNA]</scope>
    <source>
        <strain>ATCC 51907 / DSM 11121 / KW20 / Rd</strain>
    </source>
</reference>